<organism>
    <name type="scientific">Schizosaccharomyces pombe (strain 972 / ATCC 24843)</name>
    <name type="common">Fission yeast</name>
    <dbReference type="NCBI Taxonomy" id="284812"/>
    <lineage>
        <taxon>Eukaryota</taxon>
        <taxon>Fungi</taxon>
        <taxon>Dikarya</taxon>
        <taxon>Ascomycota</taxon>
        <taxon>Taphrinomycotina</taxon>
        <taxon>Schizosaccharomycetes</taxon>
        <taxon>Schizosaccharomycetales</taxon>
        <taxon>Schizosaccharomycetaceae</taxon>
        <taxon>Schizosaccharomyces</taxon>
    </lineage>
</organism>
<evidence type="ECO:0000269" key="1">
    <source>
    </source>
</evidence>
<proteinExistence type="predicted"/>
<keyword id="KW-0963">Cytoplasm</keyword>
<keyword id="KW-1185">Reference proteome</keyword>
<sequence>MSVPIDRINTVDTLANTLESNLKFFPEKIHFNIRGKLIVIDRVELPILPTTVLALLFPNGFHLLLKHEGGDVSSCFKCHKIDPSICKWILDTYLPLFKKSNNAYPSKIAFNPISNTTLVLFLTECCNIYLFSENKKPVDQKIRSDLLEQTFKNNDVFESADKKKIRKGLSDGPLVDALQHCGFRYNDKWAKRVKEPKLMSLMSYIITTVESSSLSEEFLSKILKLWGQPGNKCWWINEVIKVNGSLINVWRRKQWLLEVTIMGNRENSQD</sequence>
<reference key="1">
    <citation type="journal article" date="2002" name="Nature">
        <title>The genome sequence of Schizosaccharomyces pombe.</title>
        <authorList>
            <person name="Wood V."/>
            <person name="Gwilliam R."/>
            <person name="Rajandream M.A."/>
            <person name="Lyne M.H."/>
            <person name="Lyne R."/>
            <person name="Stewart A."/>
            <person name="Sgouros J.G."/>
            <person name="Peat N."/>
            <person name="Hayles J."/>
            <person name="Baker S.G."/>
            <person name="Basham D."/>
            <person name="Bowman S."/>
            <person name="Brooks K."/>
            <person name="Brown D."/>
            <person name="Brown S."/>
            <person name="Chillingworth T."/>
            <person name="Churcher C.M."/>
            <person name="Collins M."/>
            <person name="Connor R."/>
            <person name="Cronin A."/>
            <person name="Davis P."/>
            <person name="Feltwell T."/>
            <person name="Fraser A."/>
            <person name="Gentles S."/>
            <person name="Goble A."/>
            <person name="Hamlin N."/>
            <person name="Harris D.E."/>
            <person name="Hidalgo J."/>
            <person name="Hodgson G."/>
            <person name="Holroyd S."/>
            <person name="Hornsby T."/>
            <person name="Howarth S."/>
            <person name="Huckle E.J."/>
            <person name="Hunt S."/>
            <person name="Jagels K."/>
            <person name="James K.D."/>
            <person name="Jones L."/>
            <person name="Jones M."/>
            <person name="Leather S."/>
            <person name="McDonald S."/>
            <person name="McLean J."/>
            <person name="Mooney P."/>
            <person name="Moule S."/>
            <person name="Mungall K.L."/>
            <person name="Murphy L.D."/>
            <person name="Niblett D."/>
            <person name="Odell C."/>
            <person name="Oliver K."/>
            <person name="O'Neil S."/>
            <person name="Pearson D."/>
            <person name="Quail M.A."/>
            <person name="Rabbinowitsch E."/>
            <person name="Rutherford K.M."/>
            <person name="Rutter S."/>
            <person name="Saunders D."/>
            <person name="Seeger K."/>
            <person name="Sharp S."/>
            <person name="Skelton J."/>
            <person name="Simmonds M.N."/>
            <person name="Squares R."/>
            <person name="Squares S."/>
            <person name="Stevens K."/>
            <person name="Taylor K."/>
            <person name="Taylor R.G."/>
            <person name="Tivey A."/>
            <person name="Walsh S.V."/>
            <person name="Warren T."/>
            <person name="Whitehead S."/>
            <person name="Woodward J.R."/>
            <person name="Volckaert G."/>
            <person name="Aert R."/>
            <person name="Robben J."/>
            <person name="Grymonprez B."/>
            <person name="Weltjens I."/>
            <person name="Vanstreels E."/>
            <person name="Rieger M."/>
            <person name="Schaefer M."/>
            <person name="Mueller-Auer S."/>
            <person name="Gabel C."/>
            <person name="Fuchs M."/>
            <person name="Duesterhoeft A."/>
            <person name="Fritzc C."/>
            <person name="Holzer E."/>
            <person name="Moestl D."/>
            <person name="Hilbert H."/>
            <person name="Borzym K."/>
            <person name="Langer I."/>
            <person name="Beck A."/>
            <person name="Lehrach H."/>
            <person name="Reinhardt R."/>
            <person name="Pohl T.M."/>
            <person name="Eger P."/>
            <person name="Zimmermann W."/>
            <person name="Wedler H."/>
            <person name="Wambutt R."/>
            <person name="Purnelle B."/>
            <person name="Goffeau A."/>
            <person name="Cadieu E."/>
            <person name="Dreano S."/>
            <person name="Gloux S."/>
            <person name="Lelaure V."/>
            <person name="Mottier S."/>
            <person name="Galibert F."/>
            <person name="Aves S.J."/>
            <person name="Xiang Z."/>
            <person name="Hunt C."/>
            <person name="Moore K."/>
            <person name="Hurst S.M."/>
            <person name="Lucas M."/>
            <person name="Rochet M."/>
            <person name="Gaillardin C."/>
            <person name="Tallada V.A."/>
            <person name="Garzon A."/>
            <person name="Thode G."/>
            <person name="Daga R.R."/>
            <person name="Cruzado L."/>
            <person name="Jimenez J."/>
            <person name="Sanchez M."/>
            <person name="del Rey F."/>
            <person name="Benito J."/>
            <person name="Dominguez A."/>
            <person name="Revuelta J.L."/>
            <person name="Moreno S."/>
            <person name="Armstrong J."/>
            <person name="Forsburg S.L."/>
            <person name="Cerutti L."/>
            <person name="Lowe T."/>
            <person name="McCombie W.R."/>
            <person name="Paulsen I."/>
            <person name="Potashkin J."/>
            <person name="Shpakovski G.V."/>
            <person name="Ussery D."/>
            <person name="Barrell B.G."/>
            <person name="Nurse P."/>
        </authorList>
    </citation>
    <scope>NUCLEOTIDE SEQUENCE [LARGE SCALE GENOMIC DNA]</scope>
    <source>
        <strain>972 / ATCC 24843</strain>
    </source>
</reference>
<reference key="2">
    <citation type="journal article" date="2006" name="Nat. Biotechnol.">
        <title>ORFeome cloning and global analysis of protein localization in the fission yeast Schizosaccharomyces pombe.</title>
        <authorList>
            <person name="Matsuyama A."/>
            <person name="Arai R."/>
            <person name="Yashiroda Y."/>
            <person name="Shirai A."/>
            <person name="Kamata A."/>
            <person name="Sekido S."/>
            <person name="Kobayashi Y."/>
            <person name="Hashimoto A."/>
            <person name="Hamamoto M."/>
            <person name="Hiraoka Y."/>
            <person name="Horinouchi S."/>
            <person name="Yoshida M."/>
        </authorList>
    </citation>
    <scope>SUBCELLULAR LOCATION [LARGE SCALE ANALYSIS]</scope>
</reference>
<gene>
    <name type="ORF">SPAC20H4.08</name>
</gene>
<dbReference type="EMBL" id="CU329670">
    <property type="protein sequence ID" value="CAC19738.1"/>
    <property type="molecule type" value="Genomic_DNA"/>
</dbReference>
<dbReference type="BioGRID" id="279278">
    <property type="interactions" value="15"/>
</dbReference>
<dbReference type="FunCoup" id="Q7LKV1">
    <property type="interactions" value="272"/>
</dbReference>
<dbReference type="IntAct" id="Q7LKV1">
    <property type="interactions" value="1"/>
</dbReference>
<dbReference type="STRING" id="284812.Q7LKV1"/>
<dbReference type="iPTMnet" id="Q7LKV1"/>
<dbReference type="PaxDb" id="4896-SPAC20H4.08.1"/>
<dbReference type="EnsemblFungi" id="SPAC20H4.08.1">
    <property type="protein sequence ID" value="SPAC20H4.08.1:pep"/>
    <property type="gene ID" value="SPAC20H4.08"/>
</dbReference>
<dbReference type="KEGG" id="spo:2542831"/>
<dbReference type="PomBase" id="SPAC20H4.08"/>
<dbReference type="VEuPathDB" id="FungiDB:SPAC20H4.08"/>
<dbReference type="HOGENOM" id="CLU_1050351_0_0_1"/>
<dbReference type="InParanoid" id="Q7LKV1"/>
<dbReference type="OMA" id="VEFCDIY"/>
<dbReference type="PhylomeDB" id="Q7LKV1"/>
<dbReference type="PRO" id="PR:Q7LKV1"/>
<dbReference type="Proteomes" id="UP000002485">
    <property type="component" value="Chromosome I"/>
</dbReference>
<dbReference type="GO" id="GO:0071013">
    <property type="term" value="C:catalytic step 2 spliceosome"/>
    <property type="evidence" value="ECO:0000250"/>
    <property type="project" value="PomBase"/>
</dbReference>
<dbReference type="GO" id="GO:0005829">
    <property type="term" value="C:cytosol"/>
    <property type="evidence" value="ECO:0007005"/>
    <property type="project" value="PomBase"/>
</dbReference>
<dbReference type="GO" id="GO:0005634">
    <property type="term" value="C:nucleus"/>
    <property type="evidence" value="ECO:0000318"/>
    <property type="project" value="GO_Central"/>
</dbReference>
<dbReference type="GO" id="GO:0003723">
    <property type="term" value="F:RNA binding"/>
    <property type="evidence" value="ECO:0000318"/>
    <property type="project" value="GO_Central"/>
</dbReference>
<dbReference type="GO" id="GO:0045292">
    <property type="term" value="P:mRNA cis splicing, via spliceosome"/>
    <property type="evidence" value="ECO:0000250"/>
    <property type="project" value="PomBase"/>
</dbReference>
<comment type="subcellular location">
    <subcellularLocation>
        <location evidence="1">Cytoplasm</location>
    </subcellularLocation>
</comment>
<protein>
    <recommendedName>
        <fullName>Uncharacterized protein C20H4.08</fullName>
    </recommendedName>
</protein>
<name>YK98_SCHPO</name>
<accession>Q7LKV1</accession>
<feature type="chain" id="PRO_0000353826" description="Uncharacterized protein C20H4.08">
    <location>
        <begin position="1"/>
        <end position="270"/>
    </location>
</feature>